<dbReference type="EMBL" id="X12599">
    <property type="protein sequence ID" value="CAA31114.1"/>
    <property type="molecule type" value="Genomic_DNA"/>
</dbReference>
<dbReference type="EMBL" id="X13303">
    <property type="protein sequence ID" value="CAA31670.1"/>
    <property type="molecule type" value="Genomic_DNA"/>
</dbReference>
<dbReference type="PIR" id="S01838">
    <property type="entry name" value="S01838"/>
</dbReference>
<dbReference type="SMR" id="P09135"/>
<dbReference type="GO" id="GO:0009399">
    <property type="term" value="P:nitrogen fixation"/>
    <property type="evidence" value="ECO:0007669"/>
    <property type="project" value="UniProtKB-KW"/>
</dbReference>
<dbReference type="CDD" id="cd00853">
    <property type="entry name" value="NifX"/>
    <property type="match status" value="1"/>
</dbReference>
<dbReference type="Gene3D" id="3.30.420.130">
    <property type="entry name" value="Dinitrogenase iron-molybdenum cofactor biosynthesis domain"/>
    <property type="match status" value="1"/>
</dbReference>
<dbReference type="InterPro" id="IPR003731">
    <property type="entry name" value="Di-Nase_FeMo-co_biosynth"/>
</dbReference>
<dbReference type="InterPro" id="IPR036105">
    <property type="entry name" value="DiNase_FeMo-co_biosyn_sf"/>
</dbReference>
<dbReference type="InterPro" id="IPR034169">
    <property type="entry name" value="NifX-like"/>
</dbReference>
<dbReference type="Pfam" id="PF02579">
    <property type="entry name" value="Nitro_FeMo-Co"/>
    <property type="match status" value="1"/>
</dbReference>
<dbReference type="SUPFAM" id="SSF53146">
    <property type="entry name" value="Nitrogenase accessory factor-like"/>
    <property type="match status" value="1"/>
</dbReference>
<reference key="1">
    <citation type="journal article" date="1988" name="Nucleic Acids Res.">
        <title>The nucleotide sequence of the nifT, nifY, nifX and nifW genes of K. pneumoniae.</title>
        <authorList>
            <person name="Beynon J."/>
            <person name="Cannon M."/>
            <person name="Banan-Wollaston V."/>
            <person name="Ally A."/>
            <person name="Sutterquist R."/>
            <person name="Cannon F."/>
        </authorList>
    </citation>
    <scope>NUCLEOTIDE SEQUENCE [GENOMIC DNA]</scope>
</reference>
<reference key="2">
    <citation type="journal article" date="1988" name="J. Mol. Biol.">
        <title>Nucleotide sequence of a 24,206-base-pair DNA fragment carrying the entire nitrogen fixation gene cluster of Klebsiella pneumoniae.</title>
        <authorList>
            <person name="Arnold W."/>
            <person name="Rump A."/>
            <person name="Klipp W."/>
            <person name="Priefer U.B."/>
            <person name="Puehler A."/>
        </authorList>
    </citation>
    <scope>NUCLEOTIDE SEQUENCE [GENOMIC DNA]</scope>
</reference>
<name>NIFY_KLEPN</name>
<organism>
    <name type="scientific">Klebsiella pneumoniae</name>
    <dbReference type="NCBI Taxonomy" id="573"/>
    <lineage>
        <taxon>Bacteria</taxon>
        <taxon>Pseudomonadati</taxon>
        <taxon>Pseudomonadota</taxon>
        <taxon>Gammaproteobacteria</taxon>
        <taxon>Enterobacterales</taxon>
        <taxon>Enterobacteriaceae</taxon>
        <taxon>Klebsiella/Raoultella group</taxon>
        <taxon>Klebsiella</taxon>
        <taxon>Klebsiella pneumoniae complex</taxon>
    </lineage>
</organism>
<proteinExistence type="inferred from homology"/>
<keyword id="KW-0535">Nitrogen fixation</keyword>
<sequence length="229" mass="25518">MSDNDTLFWRMLALFQSLPDLQPAQIVDWLAQESGETLTPERLATLTQPQLAASFPSATAVMSPARWSRVMASLQGALPAHLRIVRPAQRTPQLLAAFCSQDGLVINGHFGQGRLFFIYAFDEQGGWLYDLRRYPSAPHQQEANEVRARLIEDCQLLFCQEIGGPAAARLIRHRIHPMKAQPGTTIQAQCEAINTLLAGRLPPWLAKGLTGITLWKNAFFNPCFVLVAR</sequence>
<evidence type="ECO:0000305" key="1"/>
<gene>
    <name type="primary">nifY</name>
</gene>
<feature type="chain" id="PRO_0000096835" description="Protein NifY">
    <location>
        <begin position="1"/>
        <end position="229"/>
    </location>
</feature>
<feature type="sequence conflict" description="In Ref. 2; CAA31670." evidence="1" ref="2">
    <original>L</original>
    <variation>P</variation>
    <location>
        <position position="170"/>
    </location>
</feature>
<feature type="sequence conflict" description="In Ref. 2; CAA31670." evidence="1" ref="2">
    <original>GLTGITLWKNAFFNPCFVLVAR</original>
    <variation>RLNRDNPLEERVF</variation>
    <location>
        <begin position="208"/>
        <end position="229"/>
    </location>
</feature>
<comment type="similarity">
    <text evidence="1">Belongs to the NifX/NifY family.</text>
</comment>
<protein>
    <recommendedName>
        <fullName>Protein NifY</fullName>
    </recommendedName>
</protein>
<accession>P09135</accession>